<evidence type="ECO:0000255" key="1">
    <source>
        <dbReference type="HAMAP-Rule" id="MF_01369"/>
    </source>
</evidence>
<evidence type="ECO:0000305" key="2"/>
<sequence>MNLYDVIKKPVITEKSMIALEAGKYTFEVDTRAHKLLIKQAVEAAFDGVKVASVNTVNVKPKAKRVGRYTGFTSKTKKAIITLTADSKAIELFAAEAE</sequence>
<comment type="function">
    <text evidence="1">One of the early assembly proteins it binds 23S rRNA. One of the proteins that surrounds the polypeptide exit tunnel on the outside of the ribosome. Forms the main docking site for trigger factor binding to the ribosome.</text>
</comment>
<comment type="subunit">
    <text evidence="1">Part of the 50S ribosomal subunit. Contacts protein L29, and trigger factor when it is bound to the ribosome.</text>
</comment>
<comment type="similarity">
    <text evidence="1">Belongs to the universal ribosomal protein uL23 family.</text>
</comment>
<gene>
    <name evidence="1" type="primary">rplW</name>
    <name type="ordered locus">MGAS10750_Spy0049</name>
</gene>
<accession>Q1J912</accession>
<protein>
    <recommendedName>
        <fullName evidence="1">Large ribosomal subunit protein uL23</fullName>
    </recommendedName>
    <alternativeName>
        <fullName evidence="2">50S ribosomal protein L23</fullName>
    </alternativeName>
</protein>
<organism>
    <name type="scientific">Streptococcus pyogenes serotype M4 (strain MGAS10750)</name>
    <dbReference type="NCBI Taxonomy" id="370554"/>
    <lineage>
        <taxon>Bacteria</taxon>
        <taxon>Bacillati</taxon>
        <taxon>Bacillota</taxon>
        <taxon>Bacilli</taxon>
        <taxon>Lactobacillales</taxon>
        <taxon>Streptococcaceae</taxon>
        <taxon>Streptococcus</taxon>
    </lineage>
</organism>
<keyword id="KW-0687">Ribonucleoprotein</keyword>
<keyword id="KW-0689">Ribosomal protein</keyword>
<keyword id="KW-0694">RNA-binding</keyword>
<keyword id="KW-0699">rRNA-binding</keyword>
<reference key="1">
    <citation type="journal article" date="2006" name="Proc. Natl. Acad. Sci. U.S.A.">
        <title>Molecular genetic anatomy of inter- and intraserotype variation in the human bacterial pathogen group A Streptococcus.</title>
        <authorList>
            <person name="Beres S.B."/>
            <person name="Richter E.W."/>
            <person name="Nagiec M.J."/>
            <person name="Sumby P."/>
            <person name="Porcella S.F."/>
            <person name="DeLeo F.R."/>
            <person name="Musser J.M."/>
        </authorList>
    </citation>
    <scope>NUCLEOTIDE SEQUENCE [LARGE SCALE GENOMIC DNA]</scope>
    <source>
        <strain>MGAS10750</strain>
    </source>
</reference>
<dbReference type="EMBL" id="CP000262">
    <property type="protein sequence ID" value="ABF36999.1"/>
    <property type="molecule type" value="Genomic_DNA"/>
</dbReference>
<dbReference type="SMR" id="Q1J912"/>
<dbReference type="KEGG" id="spi:MGAS10750_Spy0049"/>
<dbReference type="HOGENOM" id="CLU_037562_3_2_9"/>
<dbReference type="Proteomes" id="UP000002434">
    <property type="component" value="Chromosome"/>
</dbReference>
<dbReference type="GO" id="GO:1990904">
    <property type="term" value="C:ribonucleoprotein complex"/>
    <property type="evidence" value="ECO:0007669"/>
    <property type="project" value="UniProtKB-KW"/>
</dbReference>
<dbReference type="GO" id="GO:0005840">
    <property type="term" value="C:ribosome"/>
    <property type="evidence" value="ECO:0007669"/>
    <property type="project" value="UniProtKB-KW"/>
</dbReference>
<dbReference type="GO" id="GO:0019843">
    <property type="term" value="F:rRNA binding"/>
    <property type="evidence" value="ECO:0007669"/>
    <property type="project" value="UniProtKB-UniRule"/>
</dbReference>
<dbReference type="GO" id="GO:0003735">
    <property type="term" value="F:structural constituent of ribosome"/>
    <property type="evidence" value="ECO:0007669"/>
    <property type="project" value="InterPro"/>
</dbReference>
<dbReference type="GO" id="GO:0006412">
    <property type="term" value="P:translation"/>
    <property type="evidence" value="ECO:0007669"/>
    <property type="project" value="UniProtKB-UniRule"/>
</dbReference>
<dbReference type="FunFam" id="3.30.70.330:FF:000001">
    <property type="entry name" value="50S ribosomal protein L23"/>
    <property type="match status" value="1"/>
</dbReference>
<dbReference type="Gene3D" id="3.30.70.330">
    <property type="match status" value="1"/>
</dbReference>
<dbReference type="HAMAP" id="MF_01369_B">
    <property type="entry name" value="Ribosomal_uL23_B"/>
    <property type="match status" value="1"/>
</dbReference>
<dbReference type="InterPro" id="IPR012677">
    <property type="entry name" value="Nucleotide-bd_a/b_plait_sf"/>
</dbReference>
<dbReference type="InterPro" id="IPR013025">
    <property type="entry name" value="Ribosomal_uL23-like"/>
</dbReference>
<dbReference type="InterPro" id="IPR012678">
    <property type="entry name" value="Ribosomal_uL23/eL15/eS24_sf"/>
</dbReference>
<dbReference type="InterPro" id="IPR001014">
    <property type="entry name" value="Ribosomal_uL23_CS"/>
</dbReference>
<dbReference type="NCBIfam" id="NF004361">
    <property type="entry name" value="PRK05738.2-1"/>
    <property type="match status" value="1"/>
</dbReference>
<dbReference type="NCBIfam" id="NF004363">
    <property type="entry name" value="PRK05738.2-4"/>
    <property type="match status" value="1"/>
</dbReference>
<dbReference type="PANTHER" id="PTHR11620">
    <property type="entry name" value="60S RIBOSOMAL PROTEIN L23A"/>
    <property type="match status" value="1"/>
</dbReference>
<dbReference type="Pfam" id="PF00276">
    <property type="entry name" value="Ribosomal_L23"/>
    <property type="match status" value="1"/>
</dbReference>
<dbReference type="SUPFAM" id="SSF54189">
    <property type="entry name" value="Ribosomal proteins S24e, L23 and L15e"/>
    <property type="match status" value="1"/>
</dbReference>
<dbReference type="PROSITE" id="PS00050">
    <property type="entry name" value="RIBOSOMAL_L23"/>
    <property type="match status" value="1"/>
</dbReference>
<proteinExistence type="inferred from homology"/>
<name>RL23_STRPF</name>
<feature type="chain" id="PRO_1000068169" description="Large ribosomal subunit protein uL23">
    <location>
        <begin position="1"/>
        <end position="98"/>
    </location>
</feature>